<gene>
    <name evidence="1" type="primary">rutD</name>
    <name type="ordered locus">KPN78578_10090</name>
    <name type="ORF">KPN_01035</name>
</gene>
<organism>
    <name type="scientific">Klebsiella pneumoniae subsp. pneumoniae (strain ATCC 700721 / MGH 78578)</name>
    <dbReference type="NCBI Taxonomy" id="272620"/>
    <lineage>
        <taxon>Bacteria</taxon>
        <taxon>Pseudomonadati</taxon>
        <taxon>Pseudomonadota</taxon>
        <taxon>Gammaproteobacteria</taxon>
        <taxon>Enterobacterales</taxon>
        <taxon>Enterobacteriaceae</taxon>
        <taxon>Klebsiella/Raoultella group</taxon>
        <taxon>Klebsiella</taxon>
        <taxon>Klebsiella pneumoniae complex</taxon>
    </lineage>
</organism>
<name>RUTD_KLEP7</name>
<reference key="1">
    <citation type="submission" date="2006-09" db="EMBL/GenBank/DDBJ databases">
        <authorList>
            <consortium name="The Klebsiella pneumonia Genome Sequencing Project"/>
            <person name="McClelland M."/>
            <person name="Sanderson E.K."/>
            <person name="Spieth J."/>
            <person name="Clifton W.S."/>
            <person name="Latreille P."/>
            <person name="Sabo A."/>
            <person name="Pepin K."/>
            <person name="Bhonagiri V."/>
            <person name="Porwollik S."/>
            <person name="Ali J."/>
            <person name="Wilson R.K."/>
        </authorList>
    </citation>
    <scope>NUCLEOTIDE SEQUENCE [LARGE SCALE GENOMIC DNA]</scope>
    <source>
        <strain>ATCC 700721 / MGH 78578</strain>
    </source>
</reference>
<dbReference type="EC" id="3.5.1.-" evidence="1"/>
<dbReference type="EMBL" id="CP000647">
    <property type="protein sequence ID" value="ABR76470.1"/>
    <property type="molecule type" value="Genomic_DNA"/>
</dbReference>
<dbReference type="SMR" id="A6T799"/>
<dbReference type="STRING" id="272620.KPN_01035"/>
<dbReference type="ESTHER" id="klep7-a6t799">
    <property type="family name" value="RutD"/>
</dbReference>
<dbReference type="PaxDb" id="272620-KPN_01035"/>
<dbReference type="DNASU" id="5339077"/>
<dbReference type="EnsemblBacteria" id="ABR76470">
    <property type="protein sequence ID" value="ABR76470"/>
    <property type="gene ID" value="KPN_01035"/>
</dbReference>
<dbReference type="KEGG" id="kpn:KPN_01035"/>
<dbReference type="HOGENOM" id="CLU_020336_50_1_6"/>
<dbReference type="Proteomes" id="UP000000265">
    <property type="component" value="Chromosome"/>
</dbReference>
<dbReference type="GO" id="GO:0016811">
    <property type="term" value="F:hydrolase activity, acting on carbon-nitrogen (but not peptide) bonds, in linear amides"/>
    <property type="evidence" value="ECO:0007669"/>
    <property type="project" value="InterPro"/>
</dbReference>
<dbReference type="GO" id="GO:0019740">
    <property type="term" value="P:nitrogen utilization"/>
    <property type="evidence" value="ECO:0007669"/>
    <property type="project" value="UniProtKB-UniRule"/>
</dbReference>
<dbReference type="GO" id="GO:0006212">
    <property type="term" value="P:uracil catabolic process"/>
    <property type="evidence" value="ECO:0007669"/>
    <property type="project" value="UniProtKB-UniRule"/>
</dbReference>
<dbReference type="Gene3D" id="3.40.50.1820">
    <property type="entry name" value="alpha/beta hydrolase"/>
    <property type="match status" value="1"/>
</dbReference>
<dbReference type="HAMAP" id="MF_00832">
    <property type="entry name" value="RutD"/>
    <property type="match status" value="1"/>
</dbReference>
<dbReference type="InterPro" id="IPR050471">
    <property type="entry name" value="AB_hydrolase"/>
</dbReference>
<dbReference type="InterPro" id="IPR000073">
    <property type="entry name" value="AB_hydrolase_1"/>
</dbReference>
<dbReference type="InterPro" id="IPR029058">
    <property type="entry name" value="AB_hydrolase_fold"/>
</dbReference>
<dbReference type="InterPro" id="IPR019913">
    <property type="entry name" value="Pyrimidine_utilisation_RutD"/>
</dbReference>
<dbReference type="NCBIfam" id="TIGR03611">
    <property type="entry name" value="RutD"/>
    <property type="match status" value="1"/>
</dbReference>
<dbReference type="PANTHER" id="PTHR43433:SF5">
    <property type="entry name" value="AB HYDROLASE-1 DOMAIN-CONTAINING PROTEIN"/>
    <property type="match status" value="1"/>
</dbReference>
<dbReference type="PANTHER" id="PTHR43433">
    <property type="entry name" value="HYDROLASE, ALPHA/BETA FOLD FAMILY PROTEIN"/>
    <property type="match status" value="1"/>
</dbReference>
<dbReference type="Pfam" id="PF00561">
    <property type="entry name" value="Abhydrolase_1"/>
    <property type="match status" value="1"/>
</dbReference>
<dbReference type="PRINTS" id="PR00111">
    <property type="entry name" value="ABHYDROLASE"/>
</dbReference>
<dbReference type="SUPFAM" id="SSF53474">
    <property type="entry name" value="alpha/beta-Hydrolases"/>
    <property type="match status" value="1"/>
</dbReference>
<feature type="chain" id="PRO_0000402968" description="Putative carbamate hydrolase RutD">
    <location>
        <begin position="1"/>
        <end position="266"/>
    </location>
</feature>
<feature type="domain" description="AB hydrolase-1" evidence="1">
    <location>
        <begin position="14"/>
        <end position="119"/>
    </location>
</feature>
<sequence>MRLNIAPAPWPGAPVVVLSAGLGGGGGYWLAQRAALEEQYQLVSYDHNGTGENAGPLPAGYSLATMAGELFSALQAAGIARFALVGHALGALIGLQLALDRPEAVSALALVNGWLSLSPHTRRCFQVRERLLHAGGAQAWVEAQPLFLYPAEWMAARLPRLEAEDALAISHFQGKENLLKRLQALKQADFSRRASAIACPTLIISAADDLLVPASCSRVLQTAIPGSQLVEMPWGGHACNVTDADTFNTILRDGLSAMLPVARETR</sequence>
<proteinExistence type="inferred from homology"/>
<evidence type="ECO:0000255" key="1">
    <source>
        <dbReference type="HAMAP-Rule" id="MF_00832"/>
    </source>
</evidence>
<comment type="function">
    <text evidence="1">Involved in pyrimidine catabolism. May facilitate the hydrolysis of carbamate, a reaction that can also occur spontaneously.</text>
</comment>
<comment type="catalytic activity">
    <reaction evidence="1">
        <text>carbamate + 2 H(+) = NH4(+) + CO2</text>
        <dbReference type="Rhea" id="RHEA:15649"/>
        <dbReference type="ChEBI" id="CHEBI:13941"/>
        <dbReference type="ChEBI" id="CHEBI:15378"/>
        <dbReference type="ChEBI" id="CHEBI:16526"/>
        <dbReference type="ChEBI" id="CHEBI:28938"/>
    </reaction>
</comment>
<comment type="similarity">
    <text evidence="1">Belongs to the AB hydrolase superfamily. Hydrolase RutD family.</text>
</comment>
<protein>
    <recommendedName>
        <fullName evidence="1">Putative carbamate hydrolase RutD</fullName>
        <ecNumber evidence="1">3.5.1.-</ecNumber>
    </recommendedName>
    <alternativeName>
        <fullName evidence="1">Aminohydrolase</fullName>
    </alternativeName>
</protein>
<accession>A6T799</accession>
<keyword id="KW-0378">Hydrolase</keyword>